<dbReference type="EMBL" id="AAMC01072689">
    <property type="status" value="NOT_ANNOTATED_CDS"/>
    <property type="molecule type" value="Genomic_DNA"/>
</dbReference>
<dbReference type="EMBL" id="AAMC01072690">
    <property type="status" value="NOT_ANNOTATED_CDS"/>
    <property type="molecule type" value="Genomic_DNA"/>
</dbReference>
<dbReference type="EMBL" id="AAMC01072691">
    <property type="status" value="NOT_ANNOTATED_CDS"/>
    <property type="molecule type" value="Genomic_DNA"/>
</dbReference>
<dbReference type="EMBL" id="AAMC01072692">
    <property type="status" value="NOT_ANNOTATED_CDS"/>
    <property type="molecule type" value="Genomic_DNA"/>
</dbReference>
<dbReference type="EMBL" id="AAMC01072693">
    <property type="status" value="NOT_ANNOTATED_CDS"/>
    <property type="molecule type" value="Genomic_DNA"/>
</dbReference>
<dbReference type="EMBL" id="AAMC01072694">
    <property type="status" value="NOT_ANNOTATED_CDS"/>
    <property type="molecule type" value="Genomic_DNA"/>
</dbReference>
<dbReference type="EMBL" id="AAMC01072695">
    <property type="status" value="NOT_ANNOTATED_CDS"/>
    <property type="molecule type" value="Genomic_DNA"/>
</dbReference>
<dbReference type="EMBL" id="AAMC01072696">
    <property type="status" value="NOT_ANNOTATED_CDS"/>
    <property type="molecule type" value="Genomic_DNA"/>
</dbReference>
<dbReference type="EMBL" id="BC158183">
    <property type="protein sequence ID" value="AAI58184.1"/>
    <property type="molecule type" value="mRNA"/>
</dbReference>
<dbReference type="RefSeq" id="NP_001119970.1">
    <property type="nucleotide sequence ID" value="NM_001126498.1"/>
</dbReference>
<dbReference type="PDB" id="4LI1">
    <property type="method" value="X-ray"/>
    <property type="resolution" value="2.66 A"/>
    <property type="chains" value="A/B=23-454"/>
</dbReference>
<dbReference type="PDB" id="4LI2">
    <property type="method" value="X-ray"/>
    <property type="resolution" value="3.19 A"/>
    <property type="chains" value="A=23-454"/>
</dbReference>
<dbReference type="PDBsum" id="4LI1"/>
<dbReference type="PDBsum" id="4LI2"/>
<dbReference type="SMR" id="B0BLW3"/>
<dbReference type="DIP" id="DIP-60560N"/>
<dbReference type="FunCoup" id="B0BLW3">
    <property type="interactions" value="1376"/>
</dbReference>
<dbReference type="IntAct" id="B0BLW3">
    <property type="interactions" value="2"/>
</dbReference>
<dbReference type="MINT" id="B0BLW3"/>
<dbReference type="STRING" id="8364.ENSXETP00000024462"/>
<dbReference type="GlyCosmos" id="B0BLW3">
    <property type="glycosylation" value="4 sites, No reported glycans"/>
</dbReference>
<dbReference type="PaxDb" id="8364-ENSXETP00000061102"/>
<dbReference type="GeneID" id="100144922"/>
<dbReference type="KEGG" id="xtr:100144922"/>
<dbReference type="AGR" id="Xenbase:XB-GENE-5959108"/>
<dbReference type="CTD" id="55366"/>
<dbReference type="Xenbase" id="XB-GENE-5959108">
    <property type="gene designation" value="lgr4"/>
</dbReference>
<dbReference type="eggNOG" id="KOG0619">
    <property type="taxonomic scope" value="Eukaryota"/>
</dbReference>
<dbReference type="eggNOG" id="KOG2087">
    <property type="taxonomic scope" value="Eukaryota"/>
</dbReference>
<dbReference type="InParanoid" id="B0BLW3"/>
<dbReference type="OMA" id="PPGNCSM"/>
<dbReference type="OrthoDB" id="1883493at2759"/>
<dbReference type="TreeFam" id="TF316814"/>
<dbReference type="Reactome" id="R-XTR-4641263">
    <property type="pathway name" value="Regulation of FZD by ubiquitination"/>
</dbReference>
<dbReference type="EvolutionaryTrace" id="B0BLW3"/>
<dbReference type="Proteomes" id="UP000008143">
    <property type="component" value="Chromosome 4"/>
</dbReference>
<dbReference type="GO" id="GO:0005886">
    <property type="term" value="C:plasma membrane"/>
    <property type="evidence" value="ECO:0000250"/>
    <property type="project" value="UniProtKB"/>
</dbReference>
<dbReference type="GO" id="GO:0042802">
    <property type="term" value="F:identical protein binding"/>
    <property type="evidence" value="ECO:0000353"/>
    <property type="project" value="IntAct"/>
</dbReference>
<dbReference type="GO" id="GO:0016500">
    <property type="term" value="F:protein-hormone receptor activity"/>
    <property type="evidence" value="ECO:0007669"/>
    <property type="project" value="InterPro"/>
</dbReference>
<dbReference type="GO" id="GO:0004888">
    <property type="term" value="F:transmembrane signaling receptor activity"/>
    <property type="evidence" value="ECO:0000250"/>
    <property type="project" value="UniProtKB"/>
</dbReference>
<dbReference type="GO" id="GO:0030282">
    <property type="term" value="P:bone mineralization"/>
    <property type="evidence" value="ECO:0000250"/>
    <property type="project" value="UniProtKB"/>
</dbReference>
<dbReference type="GO" id="GO:0046849">
    <property type="term" value="P:bone remodeling"/>
    <property type="evidence" value="ECO:0000250"/>
    <property type="project" value="UniProtKB"/>
</dbReference>
<dbReference type="GO" id="GO:0007186">
    <property type="term" value="P:G protein-coupled receptor signaling pathway"/>
    <property type="evidence" value="ECO:0007669"/>
    <property type="project" value="UniProtKB-KW"/>
</dbReference>
<dbReference type="GO" id="GO:0001818">
    <property type="term" value="P:negative regulation of cytokine production"/>
    <property type="evidence" value="ECO:0000250"/>
    <property type="project" value="UniProtKB"/>
</dbReference>
<dbReference type="GO" id="GO:0034122">
    <property type="term" value="P:negative regulation of toll-like receptor signaling pathway"/>
    <property type="evidence" value="ECO:0000250"/>
    <property type="project" value="UniProtKB"/>
</dbReference>
<dbReference type="GO" id="GO:0001649">
    <property type="term" value="P:osteoblast differentiation"/>
    <property type="evidence" value="ECO:0000250"/>
    <property type="project" value="UniProtKB"/>
</dbReference>
<dbReference type="GO" id="GO:0090263">
    <property type="term" value="P:positive regulation of canonical Wnt signaling pathway"/>
    <property type="evidence" value="ECO:0000250"/>
    <property type="project" value="UniProtKB"/>
</dbReference>
<dbReference type="GO" id="GO:0048511">
    <property type="term" value="P:rhythmic process"/>
    <property type="evidence" value="ECO:0007669"/>
    <property type="project" value="UniProtKB-KW"/>
</dbReference>
<dbReference type="GO" id="GO:0007283">
    <property type="term" value="P:spermatogenesis"/>
    <property type="evidence" value="ECO:0000250"/>
    <property type="project" value="UniProtKB"/>
</dbReference>
<dbReference type="GO" id="GO:0016055">
    <property type="term" value="P:Wnt signaling pathway"/>
    <property type="evidence" value="ECO:0007669"/>
    <property type="project" value="UniProtKB-KW"/>
</dbReference>
<dbReference type="CDD" id="cd15361">
    <property type="entry name" value="7tmA_LGR4"/>
    <property type="match status" value="1"/>
</dbReference>
<dbReference type="FunFam" id="1.20.1070.10:FF:000028">
    <property type="entry name" value="leucine-rich repeat-containing G-protein coupled receptor 4 isoform X1"/>
    <property type="match status" value="1"/>
</dbReference>
<dbReference type="FunFam" id="3.80.10.10:FF:000028">
    <property type="entry name" value="leucine-rich repeat-containing G-protein coupled receptor 4 isoform X1"/>
    <property type="match status" value="1"/>
</dbReference>
<dbReference type="Gene3D" id="1.20.1070.10">
    <property type="entry name" value="Rhodopsin 7-helix transmembrane proteins"/>
    <property type="match status" value="1"/>
</dbReference>
<dbReference type="Gene3D" id="3.80.10.10">
    <property type="entry name" value="Ribonuclease Inhibitor"/>
    <property type="match status" value="1"/>
</dbReference>
<dbReference type="InterPro" id="IPR000276">
    <property type="entry name" value="GPCR_Rhodpsn"/>
</dbReference>
<dbReference type="InterPro" id="IPR017452">
    <property type="entry name" value="GPCR_Rhodpsn_7TM"/>
</dbReference>
<dbReference type="InterPro" id="IPR002131">
    <property type="entry name" value="Gphrmn_rcpt_fam"/>
</dbReference>
<dbReference type="InterPro" id="IPR001611">
    <property type="entry name" value="Leu-rich_rpt"/>
</dbReference>
<dbReference type="InterPro" id="IPR003591">
    <property type="entry name" value="Leu-rich_rpt_typical-subtyp"/>
</dbReference>
<dbReference type="InterPro" id="IPR032675">
    <property type="entry name" value="LRR_dom_sf"/>
</dbReference>
<dbReference type="PANTHER" id="PTHR24372">
    <property type="entry name" value="GLYCOPROTEIN HORMONE RECEPTOR"/>
    <property type="match status" value="1"/>
</dbReference>
<dbReference type="PANTHER" id="PTHR24372:SF67">
    <property type="entry name" value="LEUCINE-RICH REPEAT-CONTAINING G-PROTEIN COUPLED RECEPTOR 4"/>
    <property type="match status" value="1"/>
</dbReference>
<dbReference type="Pfam" id="PF00001">
    <property type="entry name" value="7tm_1"/>
    <property type="match status" value="1"/>
</dbReference>
<dbReference type="Pfam" id="PF13855">
    <property type="entry name" value="LRR_8"/>
    <property type="match status" value="4"/>
</dbReference>
<dbReference type="PRINTS" id="PR00373">
    <property type="entry name" value="GLYCHORMONER"/>
</dbReference>
<dbReference type="PRINTS" id="PR00237">
    <property type="entry name" value="GPCRRHODOPSN"/>
</dbReference>
<dbReference type="SMART" id="SM00364">
    <property type="entry name" value="LRR_BAC"/>
    <property type="match status" value="5"/>
</dbReference>
<dbReference type="SMART" id="SM00365">
    <property type="entry name" value="LRR_SD22"/>
    <property type="match status" value="6"/>
</dbReference>
<dbReference type="SMART" id="SM00369">
    <property type="entry name" value="LRR_TYP"/>
    <property type="match status" value="14"/>
</dbReference>
<dbReference type="SUPFAM" id="SSF81321">
    <property type="entry name" value="Family A G protein-coupled receptor-like"/>
    <property type="match status" value="1"/>
</dbReference>
<dbReference type="SUPFAM" id="SSF52058">
    <property type="entry name" value="L domain-like"/>
    <property type="match status" value="2"/>
</dbReference>
<dbReference type="PROSITE" id="PS50262">
    <property type="entry name" value="G_PROTEIN_RECEP_F1_2"/>
    <property type="match status" value="1"/>
</dbReference>
<dbReference type="PROSITE" id="PS51450">
    <property type="entry name" value="LRR"/>
    <property type="match status" value="15"/>
</dbReference>
<keyword id="KW-0002">3D-structure</keyword>
<keyword id="KW-0090">Biological rhythms</keyword>
<keyword id="KW-1003">Cell membrane</keyword>
<keyword id="KW-0217">Developmental protein</keyword>
<keyword id="KW-0221">Differentiation</keyword>
<keyword id="KW-1015">Disulfide bond</keyword>
<keyword id="KW-0297">G-protein coupled receptor</keyword>
<keyword id="KW-0325">Glycoprotein</keyword>
<keyword id="KW-0433">Leucine-rich repeat</keyword>
<keyword id="KW-0472">Membrane</keyword>
<keyword id="KW-0675">Receptor</keyword>
<keyword id="KW-1185">Reference proteome</keyword>
<keyword id="KW-0677">Repeat</keyword>
<keyword id="KW-0732">Signal</keyword>
<keyword id="KW-0807">Transducer</keyword>
<keyword id="KW-0812">Transmembrane</keyword>
<keyword id="KW-1133">Transmembrane helix</keyword>
<keyword id="KW-0879">Wnt signaling pathway</keyword>
<proteinExistence type="evidence at protein level"/>
<organism>
    <name type="scientific">Xenopus tropicalis</name>
    <name type="common">Western clawed frog</name>
    <name type="synonym">Silurana tropicalis</name>
    <dbReference type="NCBI Taxonomy" id="8364"/>
    <lineage>
        <taxon>Eukaryota</taxon>
        <taxon>Metazoa</taxon>
        <taxon>Chordata</taxon>
        <taxon>Craniata</taxon>
        <taxon>Vertebrata</taxon>
        <taxon>Euteleostomi</taxon>
        <taxon>Amphibia</taxon>
        <taxon>Batrachia</taxon>
        <taxon>Anura</taxon>
        <taxon>Pipoidea</taxon>
        <taxon>Pipidae</taxon>
        <taxon>Xenopodinae</taxon>
        <taxon>Xenopus</taxon>
        <taxon>Silurana</taxon>
    </lineage>
</organism>
<protein>
    <recommendedName>
        <fullName>Leucine-rich repeat-containing G-protein coupled receptor 4</fullName>
    </recommendedName>
</protein>
<evidence type="ECO:0000250" key="1">
    <source>
        <dbReference type="UniProtKB" id="A2ARI4"/>
    </source>
</evidence>
<evidence type="ECO:0000250" key="2">
    <source>
        <dbReference type="UniProtKB" id="E7FE13"/>
    </source>
</evidence>
<evidence type="ECO:0000250" key="3">
    <source>
        <dbReference type="UniProtKB" id="Q9BXB1"/>
    </source>
</evidence>
<evidence type="ECO:0000255" key="4"/>
<evidence type="ECO:0000255" key="5">
    <source>
        <dbReference type="PROSITE-ProRule" id="PRU00521"/>
    </source>
</evidence>
<evidence type="ECO:0000269" key="6">
    <source>
    </source>
</evidence>
<evidence type="ECO:0007829" key="7">
    <source>
        <dbReference type="PDB" id="4LI1"/>
    </source>
</evidence>
<evidence type="ECO:0007829" key="8">
    <source>
        <dbReference type="PDB" id="4LI2"/>
    </source>
</evidence>
<comment type="function">
    <text evidence="1 2 6">Receptor for R-spondins that potentiates the canonical Wnt signaling pathway and is involved in the formation of various organs. Upon binding to R-spondins (RSPO1, RSPO2, RSPO3 or RSPO4), associates with phosphorylated LRP6 and frizzled receptors that are activated by extracellular Wnt receptors, triggering the canonical Wnt signaling pathway to increase expression of target genes. In contrast to classical G-protein coupled receptors, does not activate heterotrimeric G-proteins to transduce the signal. Its function as activator of the Wnt signaling pathway is required for the development of various organs, including liver, kidney, intestine, bone, reproductive tract and eye. May play a role in regulating the circadian rhythms of plasma lipids (By similarity). Required for proper development of GnRH neurons (gonadotropin-releasing hormone expressing neurons) that control the release of reproductive hormones from the pituitary gland (By similarity).</text>
</comment>
<comment type="interaction">
    <interactant intactId="EBI-7425077">
        <id>B0BLW3</id>
    </interactant>
    <interactant intactId="EBI-7425077">
        <id>B0BLW3</id>
        <label>lgr4</label>
    </interactant>
    <organismsDiffer>false</organismsDiffer>
    <experiments>3</experiments>
</comment>
<comment type="interaction">
    <interactant intactId="EBI-7425077">
        <id>B0BLW3</id>
    </interactant>
    <interactant intactId="EBI-10045219">
        <id>Q2MKA7</id>
        <label>RSPO1</label>
    </interactant>
    <organismsDiffer>true</organismsDiffer>
    <experiments>2</experiments>
</comment>
<comment type="subcellular location">
    <subcellularLocation>
        <location evidence="3">Cell membrane</location>
        <topology evidence="3">Multi-pass membrane protein</topology>
    </subcellularLocation>
</comment>
<comment type="developmental stage">
    <text evidence="6">Maternally and zygotically expressed. Zygotic expression increases after gastrula stage. Expressed in all three germ layers.</text>
</comment>
<comment type="similarity">
    <text evidence="5">Belongs to the G-protein coupled receptor 1 family.</text>
</comment>
<accession>B0BLW3</accession>
<accession>F6US71</accession>
<gene>
    <name type="primary">lgr4</name>
</gene>
<feature type="signal peptide" evidence="4">
    <location>
        <begin position="1"/>
        <end position="21"/>
    </location>
</feature>
<feature type="chain" id="PRO_0000422816" description="Leucine-rich repeat-containing G-protein coupled receptor 4">
    <location>
        <begin position="22"/>
        <end position="955"/>
    </location>
</feature>
<feature type="topological domain" description="Extracellular" evidence="4">
    <location>
        <begin position="22"/>
        <end position="547"/>
    </location>
</feature>
<feature type="transmembrane region" description="Helical; Name=1" evidence="4">
    <location>
        <begin position="548"/>
        <end position="568"/>
    </location>
</feature>
<feature type="topological domain" description="Cytoplasmic" evidence="4">
    <location>
        <begin position="569"/>
        <end position="578"/>
    </location>
</feature>
<feature type="transmembrane region" description="Helical; Name=2" evidence="4">
    <location>
        <begin position="579"/>
        <end position="599"/>
    </location>
</feature>
<feature type="topological domain" description="Extracellular" evidence="4">
    <location>
        <begin position="600"/>
        <end position="623"/>
    </location>
</feature>
<feature type="transmembrane region" description="Helical; Name=3" evidence="4">
    <location>
        <begin position="624"/>
        <end position="644"/>
    </location>
</feature>
<feature type="topological domain" description="Cytoplasmic" evidence="4">
    <location>
        <begin position="645"/>
        <end position="666"/>
    </location>
</feature>
<feature type="transmembrane region" description="Helical; Name=4" evidence="4">
    <location>
        <begin position="667"/>
        <end position="687"/>
    </location>
</feature>
<feature type="topological domain" description="Extracellular" evidence="4">
    <location>
        <begin position="688"/>
        <end position="706"/>
    </location>
</feature>
<feature type="transmembrane region" description="Helical; Name=5" evidence="4">
    <location>
        <begin position="707"/>
        <end position="727"/>
    </location>
</feature>
<feature type="topological domain" description="Cytoplasmic" evidence="4">
    <location>
        <begin position="728"/>
        <end position="759"/>
    </location>
</feature>
<feature type="transmembrane region" description="Helical; Name=6" evidence="4">
    <location>
        <begin position="760"/>
        <end position="780"/>
    </location>
</feature>
<feature type="topological domain" description="Extracellular" evidence="4">
    <location>
        <begin position="781"/>
        <end position="786"/>
    </location>
</feature>
<feature type="transmembrane region" description="Helical; Name=7" evidence="4">
    <location>
        <begin position="787"/>
        <end position="807"/>
    </location>
</feature>
<feature type="topological domain" description="Cytoplasmic" evidence="4">
    <location>
        <begin position="808"/>
        <end position="955"/>
    </location>
</feature>
<feature type="domain" description="LRRNT">
    <location>
        <begin position="26"/>
        <end position="59"/>
    </location>
</feature>
<feature type="repeat" description="LRR 1">
    <location>
        <begin position="57"/>
        <end position="81"/>
    </location>
</feature>
<feature type="repeat" description="LRR 2">
    <location>
        <begin position="83"/>
        <end position="105"/>
    </location>
</feature>
<feature type="repeat" description="LRR 3">
    <location>
        <begin position="106"/>
        <end position="129"/>
    </location>
</feature>
<feature type="repeat" description="LRR 4">
    <location>
        <begin position="131"/>
        <end position="153"/>
    </location>
</feature>
<feature type="repeat" description="LRR 5">
    <location>
        <begin position="155"/>
        <end position="177"/>
    </location>
</feature>
<feature type="repeat" description="LRR 6">
    <location>
        <begin position="178"/>
        <end position="201"/>
    </location>
</feature>
<feature type="repeat" description="LRR 7">
    <location>
        <begin position="203"/>
        <end position="225"/>
    </location>
</feature>
<feature type="repeat" description="LRR 8">
    <location>
        <begin position="226"/>
        <end position="249"/>
    </location>
</feature>
<feature type="repeat" description="LRR 9">
    <location>
        <begin position="250"/>
        <end position="272"/>
    </location>
</feature>
<feature type="repeat" description="LRR 10">
    <location>
        <begin position="274"/>
        <end position="296"/>
    </location>
</feature>
<feature type="repeat" description="LRR 11">
    <location>
        <begin position="320"/>
        <end position="343"/>
    </location>
</feature>
<feature type="repeat" description="LRR 12">
    <location>
        <begin position="345"/>
        <end position="365"/>
    </location>
</feature>
<feature type="repeat" description="LRR 13">
    <location>
        <begin position="366"/>
        <end position="389"/>
    </location>
</feature>
<feature type="repeat" description="LRR 14">
    <location>
        <begin position="390"/>
        <end position="413"/>
    </location>
</feature>
<feature type="repeat" description="LRR 15">
    <location>
        <begin position="415"/>
        <end position="437"/>
    </location>
</feature>
<feature type="glycosylation site" description="N-linked (GlcNAc...) asparagine" evidence="4">
    <location>
        <position position="201"/>
    </location>
</feature>
<feature type="glycosylation site" description="N-linked (GlcNAc...) asparagine" evidence="4">
    <location>
        <position position="296"/>
    </location>
</feature>
<feature type="glycosylation site" description="N-linked (GlcNAc...) asparagine" evidence="4">
    <location>
        <position position="316"/>
    </location>
</feature>
<feature type="glycosylation site" description="N-linked (GlcNAc...) asparagine" evidence="4">
    <location>
        <position position="384"/>
    </location>
</feature>
<feature type="disulfide bond" evidence="5">
    <location>
        <begin position="31"/>
        <end position="37"/>
    </location>
</feature>
<feature type="disulfide bond" evidence="5">
    <location>
        <begin position="35"/>
        <end position="45"/>
    </location>
</feature>
<feature type="disulfide bond" evidence="5">
    <location>
        <begin position="341"/>
        <end position="366"/>
    </location>
</feature>
<feature type="disulfide bond" evidence="5">
    <location>
        <begin position="472"/>
        <end position="525"/>
    </location>
</feature>
<feature type="disulfide bond" evidence="5">
    <location>
        <begin position="473"/>
        <end position="478"/>
    </location>
</feature>
<feature type="disulfide bond" evidence="5">
    <location>
        <begin position="621"/>
        <end position="696"/>
    </location>
</feature>
<feature type="strand" evidence="8">
    <location>
        <begin position="33"/>
        <end position="37"/>
    </location>
</feature>
<feature type="strand" evidence="7">
    <location>
        <begin position="39"/>
        <end position="44"/>
    </location>
</feature>
<feature type="strand" evidence="7">
    <location>
        <begin position="62"/>
        <end position="65"/>
    </location>
</feature>
<feature type="turn" evidence="7">
    <location>
        <begin position="76"/>
        <end position="81"/>
    </location>
</feature>
<feature type="strand" evidence="7">
    <location>
        <begin position="87"/>
        <end position="89"/>
    </location>
</feature>
<feature type="turn" evidence="7">
    <location>
        <begin position="100"/>
        <end position="105"/>
    </location>
</feature>
<feature type="strand" evidence="7">
    <location>
        <begin position="111"/>
        <end position="113"/>
    </location>
</feature>
<feature type="turn" evidence="7">
    <location>
        <begin position="124"/>
        <end position="129"/>
    </location>
</feature>
<feature type="strand" evidence="7">
    <location>
        <begin position="135"/>
        <end position="137"/>
    </location>
</feature>
<feature type="turn" evidence="7">
    <location>
        <begin position="148"/>
        <end position="153"/>
    </location>
</feature>
<feature type="strand" evidence="7">
    <location>
        <begin position="159"/>
        <end position="161"/>
    </location>
</feature>
<feature type="helix" evidence="7">
    <location>
        <begin position="172"/>
        <end position="175"/>
    </location>
</feature>
<feature type="strand" evidence="7">
    <location>
        <begin position="183"/>
        <end position="185"/>
    </location>
</feature>
<feature type="turn" evidence="7">
    <location>
        <begin position="196"/>
        <end position="201"/>
    </location>
</feature>
<feature type="strand" evidence="7">
    <location>
        <begin position="207"/>
        <end position="209"/>
    </location>
</feature>
<feature type="turn" evidence="7">
    <location>
        <begin position="220"/>
        <end position="225"/>
    </location>
</feature>
<feature type="strand" evidence="7">
    <location>
        <begin position="231"/>
        <end position="233"/>
    </location>
</feature>
<feature type="helix" evidence="7">
    <location>
        <begin position="244"/>
        <end position="248"/>
    </location>
</feature>
<feature type="strand" evidence="7">
    <location>
        <begin position="254"/>
        <end position="256"/>
    </location>
</feature>
<feature type="turn" evidence="7">
    <location>
        <begin position="267"/>
        <end position="272"/>
    </location>
</feature>
<feature type="strand" evidence="7">
    <location>
        <begin position="278"/>
        <end position="280"/>
    </location>
</feature>
<feature type="turn" evidence="7">
    <location>
        <begin position="291"/>
        <end position="294"/>
    </location>
</feature>
<feature type="strand" evidence="7">
    <location>
        <begin position="302"/>
        <end position="306"/>
    </location>
</feature>
<feature type="strand" evidence="7">
    <location>
        <begin position="324"/>
        <end position="331"/>
    </location>
</feature>
<feature type="helix" evidence="7">
    <location>
        <begin position="339"/>
        <end position="343"/>
    </location>
</feature>
<feature type="strand" evidence="7">
    <location>
        <begin position="349"/>
        <end position="351"/>
    </location>
</feature>
<feature type="strand" evidence="7">
    <location>
        <begin position="371"/>
        <end position="373"/>
    </location>
</feature>
<feature type="strand" evidence="7">
    <location>
        <begin position="384"/>
        <end position="387"/>
    </location>
</feature>
<feature type="strand" evidence="7">
    <location>
        <begin position="395"/>
        <end position="397"/>
    </location>
</feature>
<feature type="helix" evidence="8">
    <location>
        <begin position="407"/>
        <end position="409"/>
    </location>
</feature>
<feature type="strand" evidence="7">
    <location>
        <begin position="419"/>
        <end position="421"/>
    </location>
</feature>
<feature type="strand" evidence="8">
    <location>
        <begin position="424"/>
        <end position="426"/>
    </location>
</feature>
<feature type="strand" evidence="7">
    <location>
        <begin position="439"/>
        <end position="442"/>
    </location>
</feature>
<feature type="helix" evidence="7">
    <location>
        <begin position="450"/>
        <end position="452"/>
    </location>
</feature>
<name>LGR4_XENTR</name>
<sequence length="955" mass="105725">MGCPGWPLALFALLLASCSGGPSGVSSPAPCPAPCACDLDGGADCSGKGLVTVPDGLSVFTHSLDLSMNNITKLPEGAFKGFPYLEELRLAGNDLSIIHPMALSGLKELKVLTLQNNQLKTVPSESLKGLVSLQSLRLDANHIVTVPEDSFEGLVQLRHLWLDDNSLTEVPIRPLSNLPSLQALTLALNKISHIPDYAFSNLSSLVVLHLHNNKIRTLGPHCFHGLDNLEALDLNYNNLIDFPDSIRSLPNLKELGFHSNSITIIPDGAFVKNPLLRTIHLYDNPLSFVGNSAFQNLSDLHFLIIRGASNVQWFPNLTGTNNLESLTLTGTKIRSIPIKFCQEQKMLRTLDLSYNEISALVGFEGCSSLEEVYLQNNQIQEVQNETFQGLAALRMLDLSRNRIHTIHKEAFVTLKALTNLDLSFNDLTAFPTAGLHGLNQLKLTGNPNFKETLTAKDLIKLSSVSVPYAYQCCAFSACNSYMTTTVEEDRLRAQRLLLDHDRAAMDPDYMGTEDDKEHVQALIQCNPATGPFKPCEYLLGSWMIRLTVWFIFLLALIFNVIVIVTMFASCSQLTSSKLFIGLIAVSNLFMGVYTGTLTVLDTISWGQFAEFGIWWETGNGCKVAGFLAIFSSESAIFFLMLAAIERSLSAKDIIKKEKHQHLRKFQVASLLAVLLAAAAGCLPLFHIGEFSSSPLCLPFPTGETPSLGFTVTLVLLNSLAFLIMVITYTKLYCTIEKEDLSENAESSMIKHVAWLIFTNCIFFCPVAFFSFAPLITAIYISPEIMKSVTLIFLPLPACLNPVLYVFFNPKFKEDWKLLRWRLTKRSGSVAVATNSQRGCVTQDFYYDFGMYSHLQGGNFAVCDYCESVLLKNPPPCKHLIKSHSCPTLAVVPCQRPDNYWSEFGTQSAHSDCADEEDSFVSDSSDQVQVCGRACFYQSRGLPLVRYAYNIPRMKD</sequence>
<reference key="1">
    <citation type="journal article" date="2010" name="Science">
        <title>The genome of the Western clawed frog Xenopus tropicalis.</title>
        <authorList>
            <person name="Hellsten U."/>
            <person name="Harland R.M."/>
            <person name="Gilchrist M.J."/>
            <person name="Hendrix D."/>
            <person name="Jurka J."/>
            <person name="Kapitonov V."/>
            <person name="Ovcharenko I."/>
            <person name="Putnam N.H."/>
            <person name="Shu S."/>
            <person name="Taher L."/>
            <person name="Blitz I.L."/>
            <person name="Blumberg B."/>
            <person name="Dichmann D.S."/>
            <person name="Dubchak I."/>
            <person name="Amaya E."/>
            <person name="Detter J.C."/>
            <person name="Fletcher R."/>
            <person name="Gerhard D.S."/>
            <person name="Goodstein D."/>
            <person name="Graves T."/>
            <person name="Grigoriev I.V."/>
            <person name="Grimwood J."/>
            <person name="Kawashima T."/>
            <person name="Lindquist E."/>
            <person name="Lucas S.M."/>
            <person name="Mead P.E."/>
            <person name="Mitros T."/>
            <person name="Ogino H."/>
            <person name="Ohta Y."/>
            <person name="Poliakov A.V."/>
            <person name="Pollet N."/>
            <person name="Robert J."/>
            <person name="Salamov A."/>
            <person name="Sater A.K."/>
            <person name="Schmutz J."/>
            <person name="Terry A."/>
            <person name="Vize P.D."/>
            <person name="Warren W.C."/>
            <person name="Wells D."/>
            <person name="Wills A."/>
            <person name="Wilson R.K."/>
            <person name="Zimmerman L.B."/>
            <person name="Zorn A.M."/>
            <person name="Grainger R."/>
            <person name="Grammer T."/>
            <person name="Khokha M.K."/>
            <person name="Richardson P.M."/>
            <person name="Rokhsar D.S."/>
        </authorList>
    </citation>
    <scope>NUCLEOTIDE SEQUENCE [LARGE SCALE GENOMIC DNA]</scope>
</reference>
<reference key="2">
    <citation type="submission" date="2008-01" db="EMBL/GenBank/DDBJ databases">
        <authorList>
            <consortium name="NIH - Xenopus Gene Collection (XGC) project"/>
        </authorList>
    </citation>
    <scope>NUCLEOTIDE SEQUENCE [LARGE SCALE MRNA]</scope>
    <source>
        <tissue>Brain</tissue>
    </source>
</reference>
<reference key="3">
    <citation type="journal article" date="2011" name="EMBO Rep.">
        <title>LGR4 and LGR5 are R-spondin receptors mediating Wnt/beta-catenin and Wnt/PCP signalling.</title>
        <authorList>
            <person name="Glinka A."/>
            <person name="Dolde C."/>
            <person name="Kirsch N."/>
            <person name="Huang Y.L."/>
            <person name="Kazanskaya O."/>
            <person name="Ingelfinger D."/>
            <person name="Boutros M."/>
            <person name="Cruciat C.M."/>
            <person name="Niehrs C."/>
        </authorList>
    </citation>
    <scope>FUNCTION</scope>
    <scope>DEVELOPMENTAL STAGE</scope>
</reference>